<accession>Q13574</accession>
<accession>B7Z2M9</accession>
<accession>B7Z6M3</accession>
<accession>E9PPW4</accession>
<accession>F6UCU9</accession>
<accession>G3V0F6</accession>
<accession>J3KNJ6</accession>
<accession>O00542</accession>
<accession>Q6ZVG7</accession>
<accession>Q8IVW9</accession>
<sequence length="928" mass="103981">MEPRDGSPEARSSDSESASASSSGSERDAGPEPDKAPRRLNKRRFPGLRLFGHRKAITKSGLQHLAPPPPTPGAPCSESERQIRSTVDWSESATYGEHIWFETNVSGDFCYVGEQYCVARMLKSVSRRKCAACKIVVHTPCIEQLEKINFRCKPSFRESGSRNVREPTFVRHHWVHRRRQDGKCRHCGKGFQQKFTFHSKEIVAISCSWCKQAYHSKVSCFMLQQIEEPCSLGVHAAVVIPPTWILRARRPQNTLKASKKKKRASFKRKSSKKGPEEGRWRPFIIRPTPSPLMKPLLVFVNPKSGGNQGAKIIQSFLWYLNPRQVFDLSQGGPKEALEMYRKVHNLRILACGGDGTVGWILSTLDQLRLKPPPPVAILPLGTGNDLARTLNWGGGYTDEPVSKILSHVEEGNVVQLDRWDLHAEPNPEAGPEDRDEGATDRLPLDVFNNYFSLGFDAHVTLEFHESREANPEKFNSRFRNKMFYAGTAFSDFLMGSSKDLAKHIRVVCDGMDLTPKIQDLKPQCVVFLNIPRYCAGTMPWGHPGEHHDFEPQRHDDGYLEVIGFTMTSLAALQVGGHGERLTQCREVVLTTSKAIPVQVDGEPCKLAASRIRIALRNQATMVQKAKRRSAAPLHSDQQPVPEQLRIQVSRVSMHDYEALHYDKEQLKEASVPLGTVVVPGDSDLELCRAHIERLQQEPDGAGAKSPTCQKLSPKWCFLDATTASRFYRIDRAQEHLNYVTEIAQDEIYILDPELLGASARPDLPTPTSPLPTSPCSPTPRSLQGDAAPPQGEELIEAAKRNDFCKLQELHRAGGDLMHRDEQSRTLLHHAVSTGSKDVVRYLLDHAPPEILDAVEENGETCLHQAAALGQRTICHYIVEAGASLMKTDQQGDTPRQRAEKAQDTELAAYLENRQHYQMIQREDQETAV</sequence>
<organism>
    <name type="scientific">Homo sapiens</name>
    <name type="common">Human</name>
    <dbReference type="NCBI Taxonomy" id="9606"/>
    <lineage>
        <taxon>Eukaryota</taxon>
        <taxon>Metazoa</taxon>
        <taxon>Chordata</taxon>
        <taxon>Craniata</taxon>
        <taxon>Vertebrata</taxon>
        <taxon>Euteleostomi</taxon>
        <taxon>Mammalia</taxon>
        <taxon>Eutheria</taxon>
        <taxon>Euarchontoglires</taxon>
        <taxon>Primates</taxon>
        <taxon>Haplorrhini</taxon>
        <taxon>Catarrhini</taxon>
        <taxon>Hominidae</taxon>
        <taxon>Homo</taxon>
    </lineage>
</organism>
<evidence type="ECO:0000250" key="1">
    <source>
        <dbReference type="UniProtKB" id="Q80UP3"/>
    </source>
</evidence>
<evidence type="ECO:0000255" key="2"/>
<evidence type="ECO:0000255" key="3">
    <source>
        <dbReference type="PROSITE-ProRule" id="PRU00226"/>
    </source>
</evidence>
<evidence type="ECO:0000255" key="4">
    <source>
        <dbReference type="PROSITE-ProRule" id="PRU00783"/>
    </source>
</evidence>
<evidence type="ECO:0000256" key="5">
    <source>
        <dbReference type="SAM" id="MobiDB-lite"/>
    </source>
</evidence>
<evidence type="ECO:0000269" key="6">
    <source>
    </source>
</evidence>
<evidence type="ECO:0000269" key="7">
    <source>
    </source>
</evidence>
<evidence type="ECO:0000269" key="8">
    <source>
    </source>
</evidence>
<evidence type="ECO:0000269" key="9">
    <source>
    </source>
</evidence>
<evidence type="ECO:0000269" key="10">
    <source>
    </source>
</evidence>
<evidence type="ECO:0000269" key="11">
    <source>
    </source>
</evidence>
<evidence type="ECO:0000269" key="12">
    <source>
    </source>
</evidence>
<evidence type="ECO:0000269" key="13">
    <source>
    </source>
</evidence>
<evidence type="ECO:0000269" key="14">
    <source>
    </source>
</evidence>
<evidence type="ECO:0000269" key="15">
    <source>
    </source>
</evidence>
<evidence type="ECO:0000269" key="16">
    <source>
    </source>
</evidence>
<evidence type="ECO:0000269" key="17">
    <source>
    </source>
</evidence>
<evidence type="ECO:0000269" key="18">
    <source>
    </source>
</evidence>
<evidence type="ECO:0000269" key="19">
    <source>
    </source>
</evidence>
<evidence type="ECO:0000303" key="20">
    <source>
    </source>
</evidence>
<evidence type="ECO:0000305" key="21"/>
<evidence type="ECO:0000305" key="22">
    <source>
    </source>
</evidence>
<evidence type="ECO:0000305" key="23">
    <source>
    </source>
</evidence>
<evidence type="ECO:0000305" key="24">
    <source>
    </source>
</evidence>
<evidence type="ECO:0000305" key="25">
    <source>
    </source>
</evidence>
<evidence type="ECO:0000305" key="26">
    <source>
    </source>
</evidence>
<evidence type="ECO:0000312" key="27">
    <source>
        <dbReference type="HGNC" id="HGNC:2857"/>
    </source>
</evidence>
<evidence type="ECO:0007744" key="28">
    <source>
    </source>
</evidence>
<evidence type="ECO:0007829" key="29">
    <source>
        <dbReference type="PDB" id="5ELQ"/>
    </source>
</evidence>
<name>DGKZ_HUMAN</name>
<keyword id="KW-0002">3D-structure</keyword>
<keyword id="KW-0025">Alternative splicing</keyword>
<keyword id="KW-0040">ANK repeat</keyword>
<keyword id="KW-0067">ATP-binding</keyword>
<keyword id="KW-1003">Cell membrane</keyword>
<keyword id="KW-0966">Cell projection</keyword>
<keyword id="KW-0963">Cytoplasm</keyword>
<keyword id="KW-0418">Kinase</keyword>
<keyword id="KW-0443">Lipid metabolism</keyword>
<keyword id="KW-0472">Membrane</keyword>
<keyword id="KW-0479">Metal-binding</keyword>
<keyword id="KW-0547">Nucleotide-binding</keyword>
<keyword id="KW-0539">Nucleus</keyword>
<keyword id="KW-0597">Phosphoprotein</keyword>
<keyword id="KW-1267">Proteomics identification</keyword>
<keyword id="KW-1185">Reference proteome</keyword>
<keyword id="KW-0677">Repeat</keyword>
<keyword id="KW-0808">Transferase</keyword>
<keyword id="KW-0862">Zinc</keyword>
<keyword id="KW-0863">Zinc-finger</keyword>
<comment type="function">
    <text evidence="1 8 10 12 13 14 15 16 18 26">Diacylglycerol kinase that converts diacylglycerol/DAG into phosphatidic acid/phosphatidate/PA and regulates the respective levels of these two bioactive lipids (PubMed:15544348, PubMed:18004883, PubMed:19744926, PubMed:22108654, PubMed:22627129, PubMed:23949095, PubMed:9159104). Thereby, acts as a central switch between the signaling pathways activated by these second messengers with different cellular targets and opposite effects in numerous biological processes (PubMed:15544348, PubMed:18004883, PubMed:19744926, PubMed:22108654, PubMed:22627129, PubMed:23949095, PubMed:9159104). Also plays an important role in the biosynthesis of complex lipids (Probable). Does not exhibit an acyl chain-dependent substrate specificity among diacylglycerol species (PubMed:19744926, PubMed:22108654, PubMed:9159104). Can also phosphorylate 1-alkyl-2-acylglycerol in vitro but less efficiently and with a preference for alkylacylglycerols containing an arachidonoyl group (PubMed:15544348, PubMed:19744926, PubMed:22627129). The biological processes it is involved in include T cell activation since it negatively regulates T-cell receptor signaling which is in part mediated by diacylglycerol (By similarity). By generating phosphatidic acid, stimulates PIP5KIA activity which regulates actin polymerization (PubMed:15157668). Through the same mechanism could also positively regulate insulin-induced translocation of SLC2A4 to the cell membrane (By similarity).</text>
</comment>
<comment type="function">
    <molecule>Isoform 1</molecule>
    <text evidence="6">Regulates RASGRP1 activity.</text>
</comment>
<comment type="function">
    <molecule>Isoform 2</molecule>
    <text evidence="6">Does not regulate RASGRP1 activity.</text>
</comment>
<comment type="catalytic activity">
    <reaction evidence="10 12 13 14 15 16 17 18">
        <text>a 1,2-diacyl-sn-glycerol + ATP = a 1,2-diacyl-sn-glycero-3-phosphate + ADP + H(+)</text>
        <dbReference type="Rhea" id="RHEA:10272"/>
        <dbReference type="ChEBI" id="CHEBI:15378"/>
        <dbReference type="ChEBI" id="CHEBI:17815"/>
        <dbReference type="ChEBI" id="CHEBI:30616"/>
        <dbReference type="ChEBI" id="CHEBI:58608"/>
        <dbReference type="ChEBI" id="CHEBI:456216"/>
        <dbReference type="EC" id="2.7.1.107"/>
    </reaction>
    <physiologicalReaction direction="left-to-right" evidence="22">
        <dbReference type="Rhea" id="RHEA:10273"/>
    </physiologicalReaction>
</comment>
<comment type="catalytic activity">
    <reaction evidence="15">
        <text>a 1-O-alkyl-sn-glycerol + ATP = a 1-O-alkyl-sn-glycero-3-phosphate + ADP + H(+)</text>
        <dbReference type="Rhea" id="RHEA:16937"/>
        <dbReference type="ChEBI" id="CHEBI:15378"/>
        <dbReference type="ChEBI" id="CHEBI:15850"/>
        <dbReference type="ChEBI" id="CHEBI:30616"/>
        <dbReference type="ChEBI" id="CHEBI:58014"/>
        <dbReference type="ChEBI" id="CHEBI:456216"/>
        <dbReference type="EC" id="2.7.1.93"/>
    </reaction>
    <physiologicalReaction direction="left-to-right" evidence="25">
        <dbReference type="Rhea" id="RHEA:16938"/>
    </physiologicalReaction>
</comment>
<comment type="catalytic activity">
    <reaction evidence="10">
        <text>1-O-alkyl-2-acyl-sn-glycerol + ATP = 1-O-alkyl-2-acyl-sn-glycero-3-phosphate + ADP + H(+)</text>
        <dbReference type="Rhea" id="RHEA:44072"/>
        <dbReference type="ChEBI" id="CHEBI:15378"/>
        <dbReference type="ChEBI" id="CHEBI:30616"/>
        <dbReference type="ChEBI" id="CHEBI:52595"/>
        <dbReference type="ChEBI" id="CHEBI:73332"/>
        <dbReference type="ChEBI" id="CHEBI:456216"/>
    </reaction>
    <physiologicalReaction direction="left-to-right" evidence="10">
        <dbReference type="Rhea" id="RHEA:44073"/>
    </physiologicalReaction>
</comment>
<comment type="catalytic activity">
    <reaction evidence="17">
        <text>1,2-didecanoyl-sn-glycerol + ATP = 1,2-didecanoyl-sn-glycero-3-phosphate + ADP + H(+)</text>
        <dbReference type="Rhea" id="RHEA:43428"/>
        <dbReference type="ChEBI" id="CHEBI:15378"/>
        <dbReference type="ChEBI" id="CHEBI:18155"/>
        <dbReference type="ChEBI" id="CHEBI:30616"/>
        <dbReference type="ChEBI" id="CHEBI:78227"/>
        <dbReference type="ChEBI" id="CHEBI:456216"/>
    </reaction>
    <physiologicalReaction direction="left-to-right" evidence="26">
        <dbReference type="Rhea" id="RHEA:43429"/>
    </physiologicalReaction>
</comment>
<comment type="catalytic activity">
    <reaction evidence="17 18">
        <text>1,2-ditetradecanoyl-sn-glycerol + ATP = 1,2-ditetradecanoyl-sn-glycero-3-phosphate + ADP + H(+)</text>
        <dbReference type="Rhea" id="RHEA:43444"/>
        <dbReference type="ChEBI" id="CHEBI:15378"/>
        <dbReference type="ChEBI" id="CHEBI:30616"/>
        <dbReference type="ChEBI" id="CHEBI:80651"/>
        <dbReference type="ChEBI" id="CHEBI:83550"/>
        <dbReference type="ChEBI" id="CHEBI:456216"/>
    </reaction>
    <physiologicalReaction direction="left-to-right" evidence="26">
        <dbReference type="Rhea" id="RHEA:43445"/>
    </physiologicalReaction>
</comment>
<comment type="catalytic activity">
    <reaction evidence="17 18">
        <text>1-hexadecanoyl-2-(9Z-octadecenoyl)-sn-glycerol + ATP = 1-hexadecanoyl-2-(9Z-octadecenoyl)-sn-glycero-3-phosphate + ADP + H(+)</text>
        <dbReference type="Rhea" id="RHEA:43416"/>
        <dbReference type="ChEBI" id="CHEBI:15378"/>
        <dbReference type="ChEBI" id="CHEBI:30616"/>
        <dbReference type="ChEBI" id="CHEBI:64839"/>
        <dbReference type="ChEBI" id="CHEBI:75466"/>
        <dbReference type="ChEBI" id="CHEBI:456216"/>
    </reaction>
    <physiologicalReaction direction="left-to-right" evidence="26">
        <dbReference type="Rhea" id="RHEA:43417"/>
    </physiologicalReaction>
</comment>
<comment type="catalytic activity">
    <reaction evidence="13">
        <text>1-hexadecanoyl-2-(5Z,8Z,11Z,14Z-eicosatetraenoyl)-sn-glycerol + ATP = 1-hexadecanoyl-2-(5Z,8Z,11Z,14Z-eicosatetraenoyl)-sn-glycero-3-phosphate + ADP + H(+)</text>
        <dbReference type="Rhea" id="RHEA:40335"/>
        <dbReference type="ChEBI" id="CHEBI:15378"/>
        <dbReference type="ChEBI" id="CHEBI:30616"/>
        <dbReference type="ChEBI" id="CHEBI:72864"/>
        <dbReference type="ChEBI" id="CHEBI:77096"/>
        <dbReference type="ChEBI" id="CHEBI:456216"/>
    </reaction>
    <physiologicalReaction direction="left-to-right" evidence="23">
        <dbReference type="Rhea" id="RHEA:40336"/>
    </physiologicalReaction>
</comment>
<comment type="catalytic activity">
    <reaction evidence="17 18">
        <text>1-octadecanoyl-2-(9Z-octadecenoyl)-sn-glycerol + ATP = 1-octadecanoyl-2-(9Z-octadecenoyl)-sn-glycero-3-phosphate + ADP + H(+)</text>
        <dbReference type="Rhea" id="RHEA:43424"/>
        <dbReference type="ChEBI" id="CHEBI:15378"/>
        <dbReference type="ChEBI" id="CHEBI:30616"/>
        <dbReference type="ChEBI" id="CHEBI:74560"/>
        <dbReference type="ChEBI" id="CHEBI:75468"/>
        <dbReference type="ChEBI" id="CHEBI:456216"/>
    </reaction>
    <physiologicalReaction direction="left-to-right" evidence="26">
        <dbReference type="Rhea" id="RHEA:43425"/>
    </physiologicalReaction>
</comment>
<comment type="catalytic activity">
    <reaction evidence="10 12 13 14 17 18">
        <text>1-octadecanoyl-2-(5Z,8Z,11Z,14Z-eicosatetraenoyl)-sn-glycerol + ATP = 1-octadecanoyl-2-(5Z,8Z,11Z,14Z-eicosatetraenoyl)-sn-glycero-3-phosphate + ADP + H(+)</text>
        <dbReference type="Rhea" id="RHEA:40323"/>
        <dbReference type="ChEBI" id="CHEBI:15378"/>
        <dbReference type="ChEBI" id="CHEBI:30616"/>
        <dbReference type="ChEBI" id="CHEBI:75728"/>
        <dbReference type="ChEBI" id="CHEBI:77091"/>
        <dbReference type="ChEBI" id="CHEBI:456216"/>
    </reaction>
    <physiologicalReaction direction="left-to-right" evidence="22">
        <dbReference type="Rhea" id="RHEA:40324"/>
    </physiologicalReaction>
</comment>
<comment type="catalytic activity">
    <reaction evidence="14">
        <text>1-octadecanoyl-2-(4Z,7Z,10Z,13Z,16Z,19Z-docosahexaenoyl)-sn-glycerol + ATP = 1-octadecanoyl-2-(4Z,7Z,10Z,13Z,16Z,19Z-docosahexaenoyl)-sn-glycero-3-phosphate + ADP + H(+)</text>
        <dbReference type="Rhea" id="RHEA:40359"/>
        <dbReference type="ChEBI" id="CHEBI:15378"/>
        <dbReference type="ChEBI" id="CHEBI:30616"/>
        <dbReference type="ChEBI" id="CHEBI:77129"/>
        <dbReference type="ChEBI" id="CHEBI:77130"/>
        <dbReference type="ChEBI" id="CHEBI:456216"/>
    </reaction>
    <physiologicalReaction direction="left-to-right" evidence="24">
        <dbReference type="Rhea" id="RHEA:40360"/>
    </physiologicalReaction>
</comment>
<comment type="catalytic activity">
    <reaction evidence="10 12 13 14 15 16 17 18">
        <text>1,2-di-(9Z-octadecenoyl)-sn-glycerol + ATP = 1,2-di-(9Z-octadecenoyl)-sn-glycero-3-phosphate + ADP + H(+)</text>
        <dbReference type="Rhea" id="RHEA:40327"/>
        <dbReference type="ChEBI" id="CHEBI:15378"/>
        <dbReference type="ChEBI" id="CHEBI:30616"/>
        <dbReference type="ChEBI" id="CHEBI:52333"/>
        <dbReference type="ChEBI" id="CHEBI:74546"/>
        <dbReference type="ChEBI" id="CHEBI:456216"/>
    </reaction>
    <physiologicalReaction direction="left-to-right" evidence="26">
        <dbReference type="Rhea" id="RHEA:40328"/>
    </physiologicalReaction>
</comment>
<comment type="catalytic activity">
    <reaction evidence="17 18">
        <text>1-(9Z-octadecenoyl)-2-hexadecanoyl-sn-glycerol + ATP = 1-(9Z)-octadecenoyl-2-hexadecanoyl-sn-glycero-3-phosphate + ADP + H(+)</text>
        <dbReference type="Rhea" id="RHEA:43420"/>
        <dbReference type="ChEBI" id="CHEBI:15378"/>
        <dbReference type="ChEBI" id="CHEBI:30616"/>
        <dbReference type="ChEBI" id="CHEBI:74551"/>
        <dbReference type="ChEBI" id="CHEBI:75447"/>
        <dbReference type="ChEBI" id="CHEBI:456216"/>
    </reaction>
    <physiologicalReaction direction="left-to-right" evidence="26">
        <dbReference type="Rhea" id="RHEA:43421"/>
    </physiologicalReaction>
</comment>
<comment type="catalytic activity">
    <reaction evidence="13">
        <text>1-eicosanoyl-2-(5Z,8Z,11Z,14Z)-eicosatetraenoyl-sn-glycerol + ATP = 1-eicosanoyl-2-(5Z,8Z,11Z,14Z)-eicosatetraenoyl-sn-glycero-3-phosphate + ADP + H(+)</text>
        <dbReference type="Rhea" id="RHEA:40331"/>
        <dbReference type="ChEBI" id="CHEBI:15378"/>
        <dbReference type="ChEBI" id="CHEBI:30616"/>
        <dbReference type="ChEBI" id="CHEBI:77094"/>
        <dbReference type="ChEBI" id="CHEBI:87223"/>
        <dbReference type="ChEBI" id="CHEBI:456216"/>
    </reaction>
    <physiologicalReaction direction="left-to-right" evidence="23">
        <dbReference type="Rhea" id="RHEA:40332"/>
    </physiologicalReaction>
</comment>
<comment type="catalytic activity">
    <reaction evidence="14">
        <text>1,2-di-(5Z,8Z,11Z,14Z)-eicosatetraenoyl-sn-glycerol + ATP = 1,2-di-(5Z,8Z,11Z,14Z)-eicosatetraenoyl-sn-glycero-3-phosphate + ADP + H(+)</text>
        <dbReference type="Rhea" id="RHEA:40351"/>
        <dbReference type="ChEBI" id="CHEBI:15378"/>
        <dbReference type="ChEBI" id="CHEBI:30616"/>
        <dbReference type="ChEBI" id="CHEBI:77125"/>
        <dbReference type="ChEBI" id="CHEBI:77126"/>
        <dbReference type="ChEBI" id="CHEBI:456216"/>
    </reaction>
    <physiologicalReaction direction="left-to-right" evidence="24">
        <dbReference type="Rhea" id="RHEA:40352"/>
    </physiologicalReaction>
</comment>
<comment type="catalytic activity">
    <reaction evidence="15">
        <text>1-O-hexadecyl-2-acetyl-sn-glycerol + ATP = 1-O-hexadecyl-2-acetyl-sn-glycero-3-phosphate + ADP + H(+)</text>
        <dbReference type="Rhea" id="RHEA:41676"/>
        <dbReference type="ChEBI" id="CHEBI:15378"/>
        <dbReference type="ChEBI" id="CHEBI:30616"/>
        <dbReference type="ChEBI" id="CHEBI:75936"/>
        <dbReference type="ChEBI" id="CHEBI:78385"/>
        <dbReference type="ChEBI" id="CHEBI:456216"/>
    </reaction>
    <physiologicalReaction direction="left-to-right" evidence="25">
        <dbReference type="Rhea" id="RHEA:41677"/>
    </physiologicalReaction>
</comment>
<comment type="catalytic activity">
    <reaction evidence="10">
        <text>1-O-hexadecyl-2-(5Z,8Z,11Z,14Z-eicosatetraenoyl)-sn-glycerol + ATP = 1-O-hexadecyl-2-(5Z,8Z,11Z,14Z-eicosatetraenoyl)-sn-glycero-3-phosphate + ADP + H(+)</text>
        <dbReference type="Rhea" id="RHEA:40403"/>
        <dbReference type="ChEBI" id="CHEBI:15378"/>
        <dbReference type="ChEBI" id="CHEBI:30616"/>
        <dbReference type="ChEBI" id="CHEBI:77184"/>
        <dbReference type="ChEBI" id="CHEBI:77186"/>
        <dbReference type="ChEBI" id="CHEBI:456216"/>
    </reaction>
    <physiologicalReaction direction="left-to-right" evidence="22">
        <dbReference type="Rhea" id="RHEA:40404"/>
    </physiologicalReaction>
</comment>
<comment type="catalytic activity">
    <reaction evidence="10">
        <text>1-O-hexadecyl-2-(9Z-octadecenoyl)-sn-glycerol + ATP = 1-O-hexadecyl-2-(9Z-octadecenoyl)-sn-glycero-3-phosphate + ADP + H(+)</text>
        <dbReference type="Rhea" id="RHEA:40407"/>
        <dbReference type="ChEBI" id="CHEBI:15378"/>
        <dbReference type="ChEBI" id="CHEBI:30616"/>
        <dbReference type="ChEBI" id="CHEBI:77185"/>
        <dbReference type="ChEBI" id="CHEBI:77187"/>
        <dbReference type="ChEBI" id="CHEBI:456216"/>
    </reaction>
    <physiologicalReaction direction="left-to-right" evidence="22">
        <dbReference type="Rhea" id="RHEA:40408"/>
    </physiologicalReaction>
</comment>
<comment type="catalytic activity">
    <reaction evidence="15">
        <text>1-O-hexadecyl-sn-glycerol + ATP = 1-O-hexadecyl-sn-glycero-3-phosphate + ADP + H(+)</text>
        <dbReference type="Rhea" id="RHEA:41672"/>
        <dbReference type="ChEBI" id="CHEBI:15378"/>
        <dbReference type="ChEBI" id="CHEBI:30616"/>
        <dbReference type="ChEBI" id="CHEBI:34115"/>
        <dbReference type="ChEBI" id="CHEBI:77580"/>
        <dbReference type="ChEBI" id="CHEBI:456216"/>
    </reaction>
    <physiologicalReaction direction="left-to-right" evidence="25">
        <dbReference type="Rhea" id="RHEA:41673"/>
    </physiologicalReaction>
</comment>
<comment type="activity regulation">
    <text evidence="13">Activated by 1,2-diacyl-sn-glycero-3-phosphate/phosphatidic acid irrespective of its acyl chain composition.</text>
</comment>
<comment type="pathway">
    <text evidence="26">Lipid metabolism; glycerolipid metabolism.</text>
</comment>
<comment type="subunit">
    <text evidence="1 7 8 11">Interacts (via PDZ-binding motif) with the PDZ domain of the syntrophin SNTG1 and that of SNX27 (PubMed:11352924, PubMed:17351151). Interacts with IRS1 in the absence of insulin; insulin stimulation decreases this interaction (By similarity). Found in a ternary complex with IRS1 and PIP5K1A in the absence of insulin (By similarity). Interacts with PIP5K1A (PubMed:15157668).</text>
</comment>
<comment type="subunit">
    <molecule>Isoform 1</molecule>
    <text evidence="6">Forms a signaling complex with RASGRP1 and HRAS.</text>
</comment>
<comment type="interaction">
    <interactant intactId="EBI-715527">
        <id>Q13574-2</id>
    </interactant>
    <interactant intactId="EBI-491274">
        <id>P06400</id>
        <label>RB1</label>
    </interactant>
    <organismsDiffer>false</organismsDiffer>
    <experiments>6</experiments>
</comment>
<comment type="interaction">
    <interactant intactId="EBI-715527">
        <id>Q13574-2</id>
    </interactant>
    <interactant intactId="EBI-971402">
        <id>P28749</id>
        <label>RBL1</label>
    </interactant>
    <organismsDiffer>false</organismsDiffer>
    <experiments>2</experiments>
</comment>
<comment type="interaction">
    <interactant intactId="EBI-715527">
        <id>Q13574-2</id>
    </interactant>
    <interactant intactId="EBI-971439">
        <id>Q08999</id>
        <label>RBL2</label>
    </interactant>
    <organismsDiffer>false</organismsDiffer>
    <experiments>2</experiments>
</comment>
<comment type="subcellular location">
    <subcellularLocation>
        <location evidence="6 8 18 19">Nucleus</location>
    </subcellularLocation>
    <subcellularLocation>
        <location evidence="6 15">Cytoplasm</location>
        <location evidence="6 15">Cytosol</location>
    </subcellularLocation>
    <subcellularLocation>
        <location evidence="6">Cell membrane</location>
    </subcellularLocation>
    <subcellularLocation>
        <location evidence="8">Cell projection</location>
        <location evidence="8">Lamellipodium</location>
    </subcellularLocation>
</comment>
<comment type="alternative products">
    <event type="alternative splicing"/>
    <isoform>
        <id>Q13574-2</id>
        <name>1</name>
        <name>Short</name>
        <sequence type="displayed"/>
    </isoform>
    <isoform>
        <id>Q13574-1</id>
        <name>2</name>
        <name>Long</name>
        <name>zeta2</name>
        <sequence type="described" ref="VSP_060599"/>
    </isoform>
    <isoform>
        <id>Q13574-3</id>
        <name>3</name>
        <sequence type="described" ref="VSP_060598"/>
    </isoform>
    <isoform>
        <id>Q13574-4</id>
        <name>4</name>
        <sequence type="described" ref="VSP_060601"/>
    </isoform>
    <isoform>
        <id>Q13574-5</id>
        <name>5</name>
        <sequence type="described" ref="VSP_060601 VSP_060603"/>
    </isoform>
    <isoform>
        <id>Q13574-6</id>
        <name>6</name>
        <sequence type="described" ref="VSP_060601 VSP_060602"/>
    </isoform>
    <isoform>
        <id>Q13574-7</id>
        <name>7</name>
        <sequence type="described" ref="VSP_060597 VSP_060600 VSP_060601"/>
    </isoform>
</comment>
<comment type="tissue specificity">
    <text evidence="17">Highest levels in brain, and substantial levels in skeletal muscle, heart, and pancreas.</text>
</comment>
<comment type="tissue specificity">
    <molecule>Isoform 2</molecule>
    <text evidence="18">Predominantly expressed in muscle.</text>
</comment>
<comment type="domain">
    <text evidence="7 11">The PDZ-binding motif mediates interaction with PDZ domain-containing proteins like SNTG1 and SNX27.</text>
</comment>
<comment type="PTM">
    <text evidence="19">Phosphorylation of the MARCKS homology domain by PKC reduces nuclear accumulation of DGK-zeta.</text>
</comment>
<comment type="miscellaneous">
    <molecule>Isoform 2</molecule>
    <text>Minor isoform.</text>
</comment>
<comment type="miscellaneous">
    <molecule>Isoform 1</molecule>
    <text evidence="21">Major isoform.</text>
</comment>
<comment type="similarity">
    <text evidence="21">Belongs to the eukaryotic diacylglycerol kinase family.</text>
</comment>
<comment type="sequence caution" evidence="21">
    <conflict type="frameshift">
        <sequence resource="EMBL-CDS" id="AAB60859"/>
    </conflict>
</comment>
<feature type="chain" id="PRO_0000218468" description="Diacylglycerol kinase zeta">
    <location>
        <begin position="1"/>
        <end position="928"/>
    </location>
</feature>
<feature type="domain" description="DAGKc" evidence="4">
    <location>
        <begin position="291"/>
        <end position="425"/>
    </location>
</feature>
<feature type="repeat" description="ANK 1" evidence="2">
    <location>
        <begin position="822"/>
        <end position="852"/>
    </location>
</feature>
<feature type="repeat" description="ANK 2" evidence="2">
    <location>
        <begin position="857"/>
        <end position="886"/>
    </location>
</feature>
<feature type="zinc finger region" description="Phorbol-ester/DAG-type 1" evidence="3">
    <location>
        <begin position="98"/>
        <end position="152"/>
    </location>
</feature>
<feature type="zinc finger region" description="Phorbol-ester/DAG-type 2" evidence="3">
    <location>
        <begin position="172"/>
        <end position="230"/>
    </location>
</feature>
<feature type="region of interest" description="Disordered" evidence="5">
    <location>
        <begin position="1"/>
        <end position="46"/>
    </location>
</feature>
<feature type="region of interest" description="Disordered" evidence="5">
    <location>
        <begin position="59"/>
        <end position="82"/>
    </location>
</feature>
<feature type="region of interest" description="Disordered" evidence="5">
    <location>
        <begin position="251"/>
        <end position="280"/>
    </location>
</feature>
<feature type="region of interest" description="MARCKS homology">
    <location>
        <begin position="259"/>
        <end position="273"/>
    </location>
</feature>
<feature type="region of interest" description="Mediates interaction with RASGRP1" evidence="6">
    <location>
        <begin position="278"/>
        <end position="416"/>
    </location>
</feature>
<feature type="region of interest" description="Disordered" evidence="5">
    <location>
        <begin position="759"/>
        <end position="788"/>
    </location>
</feature>
<feature type="short sequence motif" description="Nuclear export signal" evidence="1">
    <location>
        <begin position="361"/>
        <end position="369"/>
    </location>
</feature>
<feature type="short sequence motif" description="PDZ-binding" evidence="7 11">
    <location>
        <begin position="924"/>
        <end position="928"/>
    </location>
</feature>
<feature type="compositionally biased region" description="Basic and acidic residues" evidence="5">
    <location>
        <begin position="1"/>
        <end position="14"/>
    </location>
</feature>
<feature type="compositionally biased region" description="Low complexity" evidence="5">
    <location>
        <begin position="15"/>
        <end position="24"/>
    </location>
</feature>
<feature type="compositionally biased region" description="Basic and acidic residues" evidence="5">
    <location>
        <begin position="25"/>
        <end position="37"/>
    </location>
</feature>
<feature type="compositionally biased region" description="Basic residues" evidence="5">
    <location>
        <begin position="257"/>
        <end position="272"/>
    </location>
</feature>
<feature type="compositionally biased region" description="Pro residues" evidence="5">
    <location>
        <begin position="763"/>
        <end position="777"/>
    </location>
</feature>
<feature type="modified residue" description="Phosphoserine" evidence="28">
    <location>
        <position position="705"/>
    </location>
</feature>
<feature type="modified residue" description="Phosphoserine" evidence="28">
    <location>
        <position position="781"/>
    </location>
</feature>
<feature type="splice variant" id="VSP_060597" description="In isoform 7.">
    <original>MEPRDGSPEARSSDSESASASSSGSERDAGPEPDKAPRRLNKRRFPGLRLFGHR</original>
    <variation>MSAPGAGHSAGGSCNESSALGPVEALGTEEGERPGSLRQMWRYRSWDVPQIPSEAPQTQ</variation>
    <location>
        <begin position="1"/>
        <end position="54"/>
    </location>
</feature>
<feature type="splice variant" id="VSP_060598" description="In isoform 3.">
    <original>MEPRDGSPEARSSDSESASASSSGSERDAGPEPDKAPRRLNKRRFPGLRLFGH</original>
    <variation>MAEGQGGGGQRWDWAGGGRAAEEEVVRRRCRRGEEAQVAQPWPEGSRGTAAGPPVEERFRQLHLRKQVSY</variation>
    <location>
        <begin position="1"/>
        <end position="53"/>
    </location>
</feature>
<feature type="splice variant" id="VSP_060599" description="In isoform 2.">
    <original>PRDGSPEARSSDSESASASSSGSERDAGPEPDKAPRRLNKRRFPGLRLFGHR</original>
    <variation>TFFRRHFRGKVPGPGEGQQRPSSVGLPTGKARRRSPAGQASSSLAQRRRSSAQLQGCLLSCGVRAQGSSRRRSSTVPPSCNPRFIVDKVLTPQPTTVGAQLLGAPLLLTGLVGMNEEEGVQEDVVAEASSAIQPGTKTPGPPPPRGAQPLLPLPRYLRRASSHLLPADAVYDHALWGLHGYYRRLSQRRPSGQHPGPGGRRASGTTAGTMLPTRVRPLSRRRQVALRRKAAGPQAWSALLA</variation>
    <location>
        <begin position="3"/>
        <end position="54"/>
    </location>
</feature>
<feature type="splice variant" id="VSP_060600" description="In isoform 7.">
    <location>
        <position position="91"/>
    </location>
</feature>
<feature type="splice variant" id="VSP_060601" description="In isoform 6, isoform 7, isoform 5 and isoform 4.">
    <original>L</original>
    <variation>LQ</variation>
    <location>
        <position position="122"/>
    </location>
</feature>
<feature type="splice variant" id="VSP_060602" description="In isoform 6.">
    <location>
        <begin position="167"/>
        <end position="189"/>
    </location>
</feature>
<feature type="splice variant" id="VSP_060603" description="In isoform 5.">
    <original>N</original>
    <variation>NPCSPS</variation>
    <location>
        <position position="857"/>
    </location>
</feature>
<feature type="sequence variant" id="VAR_069059" description="In dbSNP:rs17854149." evidence="9">
    <original>Q</original>
    <variation>K</variation>
    <location>
        <position position="523"/>
    </location>
</feature>
<feature type="mutagenesis site" description="Loss of interaction with SNTG1." evidence="7">
    <original>TA</original>
    <variation>NS</variation>
    <location>
        <begin position="926"/>
        <end position="927"/>
    </location>
</feature>
<feature type="sequence conflict" description="In Ref. 3; BAH11915." evidence="21" ref="3">
    <original>G</original>
    <variation>W</variation>
    <location>
        <position position="305"/>
    </location>
</feature>
<feature type="sequence conflict" description="In Ref. 3; BAH11915." evidence="21" ref="3">
    <original>A</original>
    <variation>S</variation>
    <location>
        <position position="594"/>
    </location>
</feature>
<feature type="strand" evidence="29">
    <location>
        <begin position="923"/>
        <end position="927"/>
    </location>
</feature>
<feature type="sequence variant" id="VAR_083552" description="In dbSNP:rs1317826." evidence="18">
    <original>Q</original>
    <variation>R</variation>
    <location sequence="Q13574-1">
        <position position="21"/>
    </location>
</feature>
<feature type="sequence conflict" description="In Ref. 2; AAB60859." evidence="21" ref="2">
    <original>L</original>
    <variation>V</variation>
    <location sequence="Q13574-1">
        <position position="159"/>
    </location>
</feature>
<dbReference type="EC" id="2.7.1.107" evidence="10 12 13 14 15 17 18"/>
<dbReference type="EC" id="2.7.1.93" evidence="15"/>
<dbReference type="EMBL" id="U51477">
    <property type="protein sequence ID" value="AAC50478.1"/>
    <property type="molecule type" value="mRNA"/>
</dbReference>
<dbReference type="EMBL" id="U94905">
    <property type="protein sequence ID" value="AAB60859.1"/>
    <property type="status" value="ALT_FRAME"/>
    <property type="molecule type" value="mRNA"/>
</dbReference>
<dbReference type="EMBL" id="AK124594">
    <property type="protein sequence ID" value="BAC85894.1"/>
    <property type="molecule type" value="mRNA"/>
</dbReference>
<dbReference type="EMBL" id="AK294888">
    <property type="protein sequence ID" value="BAH11915.1"/>
    <property type="molecule type" value="mRNA"/>
</dbReference>
<dbReference type="EMBL" id="AK300577">
    <property type="protein sequence ID" value="BAH13309.1"/>
    <property type="molecule type" value="mRNA"/>
</dbReference>
<dbReference type="EMBL" id="AK225774">
    <property type="status" value="NOT_ANNOTATED_CDS"/>
    <property type="molecule type" value="mRNA"/>
</dbReference>
<dbReference type="EMBL" id="AC116021">
    <property type="status" value="NOT_ANNOTATED_CDS"/>
    <property type="molecule type" value="Genomic_DNA"/>
</dbReference>
<dbReference type="EMBL" id="CH471064">
    <property type="protein sequence ID" value="EAW68008.1"/>
    <property type="molecule type" value="Genomic_DNA"/>
</dbReference>
<dbReference type="EMBL" id="BC041770">
    <property type="protein sequence ID" value="AAH41770.1"/>
    <property type="molecule type" value="mRNA"/>
</dbReference>
<dbReference type="CCDS" id="CCDS41640.1">
    <molecule id="Q13574-1"/>
</dbReference>
<dbReference type="CCDS" id="CCDS44579.2">
    <molecule id="Q13574-7"/>
</dbReference>
<dbReference type="CCDS" id="CCDS44580.1">
    <molecule id="Q13574-4"/>
</dbReference>
<dbReference type="CCDS" id="CCDS55757.1">
    <molecule id="Q13574-5"/>
</dbReference>
<dbReference type="CCDS" id="CCDS55758.1">
    <molecule id="Q13574-6"/>
</dbReference>
<dbReference type="CCDS" id="CCDS55759.1">
    <molecule id="Q13574-2"/>
</dbReference>
<dbReference type="CCDS" id="CCDS7918.1">
    <molecule id="Q13574-3"/>
</dbReference>
<dbReference type="RefSeq" id="NP_001099010.1">
    <molecule id="Q13574-1"/>
    <property type="nucleotide sequence ID" value="NM_001105540.2"/>
</dbReference>
<dbReference type="RefSeq" id="NP_001186195.1">
    <molecule id="Q13574-5"/>
    <property type="nucleotide sequence ID" value="NM_001199266.2"/>
</dbReference>
<dbReference type="RefSeq" id="NP_001186196.1">
    <molecule id="Q13574-2"/>
    <property type="nucleotide sequence ID" value="NM_001199267.2"/>
</dbReference>
<dbReference type="RefSeq" id="NP_001186197.1">
    <molecule id="Q13574-6"/>
    <property type="nucleotide sequence ID" value="NM_001199268.2"/>
</dbReference>
<dbReference type="RefSeq" id="NP_003637.2">
    <molecule id="Q13574-4"/>
    <property type="nucleotide sequence ID" value="NM_003646.3"/>
</dbReference>
<dbReference type="RefSeq" id="NP_963290.1">
    <molecule id="Q13574-3"/>
    <property type="nucleotide sequence ID" value="NM_201532.3"/>
</dbReference>
<dbReference type="RefSeq" id="NP_963291.2">
    <molecule id="Q13574-7"/>
    <property type="nucleotide sequence ID" value="NM_201533.3"/>
</dbReference>
<dbReference type="PDB" id="5ELQ">
    <property type="method" value="X-ray"/>
    <property type="resolution" value="1.10 A"/>
    <property type="chains" value="C/P=921-928"/>
</dbReference>
<dbReference type="PDBsum" id="5ELQ"/>
<dbReference type="SMR" id="Q13574"/>
<dbReference type="BioGRID" id="114095">
    <property type="interactions" value="87"/>
</dbReference>
<dbReference type="CORUM" id="Q13574"/>
<dbReference type="FunCoup" id="Q13574">
    <property type="interactions" value="1893"/>
</dbReference>
<dbReference type="IntAct" id="Q13574">
    <property type="interactions" value="70"/>
</dbReference>
<dbReference type="MINT" id="Q13574"/>
<dbReference type="STRING" id="9606.ENSP00000412178"/>
<dbReference type="BindingDB" id="Q13574"/>
<dbReference type="ChEMBL" id="CHEMBL4105942"/>
<dbReference type="DrugBank" id="DB14001">
    <property type="generic name" value="alpha-Tocopherol succinate"/>
</dbReference>
<dbReference type="GuidetoPHARMACOLOGY" id="3257"/>
<dbReference type="SwissLipids" id="SLP:000000547"/>
<dbReference type="SwissLipids" id="SLP:000000921">
    <molecule id="Q13574-1"/>
</dbReference>
<dbReference type="SwissLipids" id="SLP:000000922">
    <molecule id="Q13574-2"/>
</dbReference>
<dbReference type="GlyGen" id="Q13574">
    <property type="glycosylation" value="3 sites, 1 O-linked glycan (1 site)"/>
</dbReference>
<dbReference type="iPTMnet" id="Q13574"/>
<dbReference type="MetOSite" id="Q13574"/>
<dbReference type="PhosphoSitePlus" id="Q13574"/>
<dbReference type="BioMuta" id="DGKZ"/>
<dbReference type="DMDM" id="215274170"/>
<dbReference type="jPOST" id="Q13574"/>
<dbReference type="MassIVE" id="Q13574"/>
<dbReference type="PaxDb" id="9606-ENSP00000412178"/>
<dbReference type="PeptideAtlas" id="Q13574"/>
<dbReference type="ProteomicsDB" id="22840"/>
<dbReference type="ProteomicsDB" id="32183"/>
<dbReference type="ProteomicsDB" id="59578">
    <molecule id="Q13574-1"/>
</dbReference>
<dbReference type="ProteomicsDB" id="59579">
    <molecule id="Q13574-2"/>
</dbReference>
<dbReference type="ProteomicsDB" id="59580">
    <molecule id="Q13574-3"/>
</dbReference>
<dbReference type="ProteomicsDB" id="6789"/>
<dbReference type="Pumba" id="Q13574"/>
<dbReference type="Antibodypedia" id="26268">
    <property type="antibodies" value="242 antibodies from 31 providers"/>
</dbReference>
<dbReference type="DNASU" id="8525"/>
<dbReference type="Ensembl" id="ENST00000318201.12">
    <molecule id="Q13574-6"/>
    <property type="protein sequence ID" value="ENSP00000320340.8"/>
    <property type="gene ID" value="ENSG00000149091.15"/>
</dbReference>
<dbReference type="Ensembl" id="ENST00000343674.10">
    <molecule id="Q13574-3"/>
    <property type="protein sequence ID" value="ENSP00000343065.6"/>
    <property type="gene ID" value="ENSG00000149091.15"/>
</dbReference>
<dbReference type="Ensembl" id="ENST00000421244.6">
    <molecule id="Q13574-4"/>
    <property type="protein sequence ID" value="ENSP00000391021.2"/>
    <property type="gene ID" value="ENSG00000149091.15"/>
</dbReference>
<dbReference type="Ensembl" id="ENST00000454345.6">
    <molecule id="Q13574-1"/>
    <property type="protein sequence ID" value="ENSP00000412178.1"/>
    <property type="gene ID" value="ENSG00000149091.15"/>
</dbReference>
<dbReference type="Ensembl" id="ENST00000456247.7">
    <molecule id="Q13574-2"/>
    <property type="protein sequence ID" value="ENSP00000395684.2"/>
    <property type="gene ID" value="ENSG00000149091.15"/>
</dbReference>
<dbReference type="Ensembl" id="ENST00000527911.5">
    <molecule id="Q13574-5"/>
    <property type="protein sequence ID" value="ENSP00000436291.1"/>
    <property type="gene ID" value="ENSG00000149091.15"/>
</dbReference>
<dbReference type="Ensembl" id="ENST00000532868.6">
    <molecule id="Q13574-7"/>
    <property type="protein sequence ID" value="ENSP00000436273.2"/>
    <property type="gene ID" value="ENSG00000149091.15"/>
</dbReference>
<dbReference type="GeneID" id="8525"/>
<dbReference type="KEGG" id="hsa:8525"/>
<dbReference type="MANE-Select" id="ENST00000456247.7">
    <property type="protein sequence ID" value="ENSP00000395684.2"/>
    <property type="RefSeq nucleotide sequence ID" value="NM_001199267.2"/>
    <property type="RefSeq protein sequence ID" value="NP_001186196.1"/>
</dbReference>
<dbReference type="UCSC" id="uc001nch.2">
    <molecule id="Q13574-2"/>
    <property type="organism name" value="human"/>
</dbReference>
<dbReference type="AGR" id="HGNC:2857"/>
<dbReference type="CTD" id="8525"/>
<dbReference type="DisGeNET" id="8525"/>
<dbReference type="GeneCards" id="DGKZ"/>
<dbReference type="HGNC" id="HGNC:2857">
    <property type="gene designation" value="DGKZ"/>
</dbReference>
<dbReference type="HPA" id="ENSG00000149091">
    <property type="expression patterns" value="Tissue enhanced (brain)"/>
</dbReference>
<dbReference type="MalaCards" id="DGKZ"/>
<dbReference type="MIM" id="601441">
    <property type="type" value="gene"/>
</dbReference>
<dbReference type="neXtProt" id="NX_Q13574"/>
<dbReference type="OpenTargets" id="ENSG00000149091"/>
<dbReference type="PharmGKB" id="PA27318"/>
<dbReference type="VEuPathDB" id="HostDB:ENSG00000149091"/>
<dbReference type="eggNOG" id="KOG0782">
    <property type="taxonomic scope" value="Eukaryota"/>
</dbReference>
<dbReference type="GeneTree" id="ENSGT00940000156152"/>
<dbReference type="InParanoid" id="Q13574"/>
<dbReference type="OMA" id="NMIDNDK"/>
<dbReference type="OrthoDB" id="242257at2759"/>
<dbReference type="PAN-GO" id="Q13574">
    <property type="GO annotations" value="6 GO annotations based on evolutionary models"/>
</dbReference>
<dbReference type="PhylomeDB" id="Q13574"/>
<dbReference type="TreeFam" id="TF312817"/>
<dbReference type="BRENDA" id="2.7.1.107">
    <property type="organism ID" value="2681"/>
</dbReference>
<dbReference type="PathwayCommons" id="Q13574"/>
<dbReference type="Reactome" id="R-HSA-114508">
    <property type="pathway name" value="Effects of PIP2 hydrolysis"/>
</dbReference>
<dbReference type="SignaLink" id="Q13574"/>
<dbReference type="SIGNOR" id="Q13574"/>
<dbReference type="UniPathway" id="UPA00230"/>
<dbReference type="BioGRID-ORCS" id="8525">
    <property type="hits" value="20 hits in 1162 CRISPR screens"/>
</dbReference>
<dbReference type="ChiTaRS" id="DGKZ">
    <property type="organism name" value="human"/>
</dbReference>
<dbReference type="GeneWiki" id="DGKZ"/>
<dbReference type="GenomeRNAi" id="8525"/>
<dbReference type="Pharos" id="Q13574">
    <property type="development level" value="Tchem"/>
</dbReference>
<dbReference type="PRO" id="PR:Q13574"/>
<dbReference type="Proteomes" id="UP000005640">
    <property type="component" value="Chromosome 11"/>
</dbReference>
<dbReference type="RNAct" id="Q13574">
    <property type="molecule type" value="protein"/>
</dbReference>
<dbReference type="Bgee" id="ENSG00000149091">
    <property type="expression patterns" value="Expressed in right frontal lobe and 101 other cell types or tissues"/>
</dbReference>
<dbReference type="ExpressionAtlas" id="Q13574">
    <property type="expression patterns" value="baseline and differential"/>
</dbReference>
<dbReference type="GO" id="GO:0005737">
    <property type="term" value="C:cytoplasm"/>
    <property type="evidence" value="ECO:0000304"/>
    <property type="project" value="BHF-UCL"/>
</dbReference>
<dbReference type="GO" id="GO:0005829">
    <property type="term" value="C:cytosol"/>
    <property type="evidence" value="ECO:0000314"/>
    <property type="project" value="UniProtKB"/>
</dbReference>
<dbReference type="GO" id="GO:0098978">
    <property type="term" value="C:glutamatergic synapse"/>
    <property type="evidence" value="ECO:0000318"/>
    <property type="project" value="GO_Central"/>
</dbReference>
<dbReference type="GO" id="GO:0030027">
    <property type="term" value="C:lamellipodium"/>
    <property type="evidence" value="ECO:0000314"/>
    <property type="project" value="UniProtKB"/>
</dbReference>
<dbReference type="GO" id="GO:0016607">
    <property type="term" value="C:nuclear speck"/>
    <property type="evidence" value="ECO:0000314"/>
    <property type="project" value="HPA"/>
</dbReference>
<dbReference type="GO" id="GO:0005634">
    <property type="term" value="C:nucleus"/>
    <property type="evidence" value="ECO:0000314"/>
    <property type="project" value="UniProtKB"/>
</dbReference>
<dbReference type="GO" id="GO:0005886">
    <property type="term" value="C:plasma membrane"/>
    <property type="evidence" value="ECO:0000318"/>
    <property type="project" value="GO_Central"/>
</dbReference>
<dbReference type="GO" id="GO:0047649">
    <property type="term" value="F:alkylglycerol kinase activity"/>
    <property type="evidence" value="ECO:0007669"/>
    <property type="project" value="RHEA"/>
</dbReference>
<dbReference type="GO" id="GO:0005524">
    <property type="term" value="F:ATP binding"/>
    <property type="evidence" value="ECO:0000304"/>
    <property type="project" value="ProtInc"/>
</dbReference>
<dbReference type="GO" id="GO:0004143">
    <property type="term" value="F:ATP-dependent diacylglycerol kinase activity"/>
    <property type="evidence" value="ECO:0000314"/>
    <property type="project" value="UniProtKB"/>
</dbReference>
<dbReference type="GO" id="GO:0016301">
    <property type="term" value="F:kinase activity"/>
    <property type="evidence" value="ECO:0000314"/>
    <property type="project" value="BHF-UCL"/>
</dbReference>
<dbReference type="GO" id="GO:0001727">
    <property type="term" value="F:lipid kinase activity"/>
    <property type="evidence" value="ECO:0000314"/>
    <property type="project" value="UniProtKB"/>
</dbReference>
<dbReference type="GO" id="GO:0008270">
    <property type="term" value="F:zinc ion binding"/>
    <property type="evidence" value="ECO:0007669"/>
    <property type="project" value="UniProtKB-KW"/>
</dbReference>
<dbReference type="GO" id="GO:0016477">
    <property type="term" value="P:cell migration"/>
    <property type="evidence" value="ECO:0000303"/>
    <property type="project" value="UniProtKB"/>
</dbReference>
<dbReference type="GO" id="GO:0046339">
    <property type="term" value="P:diacylglycerol metabolic process"/>
    <property type="evidence" value="ECO:0000314"/>
    <property type="project" value="UniProtKB"/>
</dbReference>
<dbReference type="GO" id="GO:0046486">
    <property type="term" value="P:glycerolipid metabolic process"/>
    <property type="evidence" value="ECO:0000314"/>
    <property type="project" value="BHF-UCL"/>
</dbReference>
<dbReference type="GO" id="GO:0035556">
    <property type="term" value="P:intracellular signal transduction"/>
    <property type="evidence" value="ECO:0000318"/>
    <property type="project" value="GO_Central"/>
</dbReference>
<dbReference type="GO" id="GO:0046834">
    <property type="term" value="P:lipid phosphorylation"/>
    <property type="evidence" value="ECO:0000314"/>
    <property type="project" value="UniProtKB"/>
</dbReference>
<dbReference type="GO" id="GO:0031571">
    <property type="term" value="P:mitotic G1 DNA damage checkpoint signaling"/>
    <property type="evidence" value="ECO:0000316"/>
    <property type="project" value="UniProtKB"/>
</dbReference>
<dbReference type="GO" id="GO:0050860">
    <property type="term" value="P:negative regulation of T cell receptor signaling pathway"/>
    <property type="evidence" value="ECO:0000250"/>
    <property type="project" value="UniProtKB"/>
</dbReference>
<dbReference type="GO" id="GO:0006654">
    <property type="term" value="P:phosphatidic acid biosynthetic process"/>
    <property type="evidence" value="ECO:0000314"/>
    <property type="project" value="UniProtKB"/>
</dbReference>
<dbReference type="GO" id="GO:0007200">
    <property type="term" value="P:phospholipase C-activating G protein-coupled receptor signaling pathway"/>
    <property type="evidence" value="ECO:0007669"/>
    <property type="project" value="InterPro"/>
</dbReference>
<dbReference type="GO" id="GO:0030168">
    <property type="term" value="P:platelet activation"/>
    <property type="evidence" value="ECO:0000304"/>
    <property type="project" value="Reactome"/>
</dbReference>
<dbReference type="CDD" id="cd20849">
    <property type="entry name" value="C1_DGKzeta_rpt1"/>
    <property type="match status" value="1"/>
</dbReference>
<dbReference type="CDD" id="cd20895">
    <property type="entry name" value="C1_DGKzeta_rpt2"/>
    <property type="match status" value="1"/>
</dbReference>
<dbReference type="FunFam" id="1.25.40.20:FF:000034">
    <property type="entry name" value="Diacylglycerol kinase"/>
    <property type="match status" value="1"/>
</dbReference>
<dbReference type="FunFam" id="2.60.200.40:FF:000002">
    <property type="entry name" value="Diacylglycerol kinase"/>
    <property type="match status" value="1"/>
</dbReference>
<dbReference type="FunFam" id="3.40.50.10330:FF:000002">
    <property type="entry name" value="Diacylglycerol kinase"/>
    <property type="match status" value="1"/>
</dbReference>
<dbReference type="Gene3D" id="2.60.200.40">
    <property type="match status" value="1"/>
</dbReference>
<dbReference type="Gene3D" id="3.30.60.20">
    <property type="match status" value="1"/>
</dbReference>
<dbReference type="Gene3D" id="1.25.40.20">
    <property type="entry name" value="Ankyrin repeat-containing domain"/>
    <property type="match status" value="1"/>
</dbReference>
<dbReference type="Gene3D" id="3.40.50.10330">
    <property type="entry name" value="Probable inorganic polyphosphate/atp-NAD kinase, domain 1"/>
    <property type="match status" value="1"/>
</dbReference>
<dbReference type="InterPro" id="IPR002110">
    <property type="entry name" value="Ankyrin_rpt"/>
</dbReference>
<dbReference type="InterPro" id="IPR036770">
    <property type="entry name" value="Ankyrin_rpt-contain_sf"/>
</dbReference>
<dbReference type="InterPro" id="IPR017438">
    <property type="entry name" value="ATP-NAD_kinase_N"/>
</dbReference>
<dbReference type="InterPro" id="IPR047485">
    <property type="entry name" value="C1_DGKzeta_rpt1"/>
</dbReference>
<dbReference type="InterPro" id="IPR047484">
    <property type="entry name" value="C1_DGKzeta_rpt2"/>
</dbReference>
<dbReference type="InterPro" id="IPR037607">
    <property type="entry name" value="DGK"/>
</dbReference>
<dbReference type="InterPro" id="IPR056383">
    <property type="entry name" value="DGKI-like_dom"/>
</dbReference>
<dbReference type="InterPro" id="IPR000756">
    <property type="entry name" value="Diacylglycerol_kin_accessory"/>
</dbReference>
<dbReference type="InterPro" id="IPR001206">
    <property type="entry name" value="Diacylglycerol_kinase_cat_dom"/>
</dbReference>
<dbReference type="InterPro" id="IPR016064">
    <property type="entry name" value="NAD/diacylglycerol_kinase_sf"/>
</dbReference>
<dbReference type="InterPro" id="IPR002219">
    <property type="entry name" value="PE/DAG-bd"/>
</dbReference>
<dbReference type="PANTHER" id="PTHR11255">
    <property type="entry name" value="DIACYLGLYCEROL KINASE"/>
    <property type="match status" value="1"/>
</dbReference>
<dbReference type="PANTHER" id="PTHR11255:SF43">
    <property type="entry name" value="DIACYLGLYCEROL KINASE ZETA"/>
    <property type="match status" value="1"/>
</dbReference>
<dbReference type="Pfam" id="PF12796">
    <property type="entry name" value="Ank_2"/>
    <property type="match status" value="1"/>
</dbReference>
<dbReference type="Pfam" id="PF00130">
    <property type="entry name" value="C1_1"/>
    <property type="match status" value="1"/>
</dbReference>
<dbReference type="Pfam" id="PF00609">
    <property type="entry name" value="DAGK_acc"/>
    <property type="match status" value="1"/>
</dbReference>
<dbReference type="Pfam" id="PF00781">
    <property type="entry name" value="DAGK_cat"/>
    <property type="match status" value="1"/>
</dbReference>
<dbReference type="Pfam" id="PF23578">
    <property type="entry name" value="DGKI"/>
    <property type="match status" value="1"/>
</dbReference>
<dbReference type="SMART" id="SM00248">
    <property type="entry name" value="ANK"/>
    <property type="match status" value="2"/>
</dbReference>
<dbReference type="SMART" id="SM00109">
    <property type="entry name" value="C1"/>
    <property type="match status" value="2"/>
</dbReference>
<dbReference type="SMART" id="SM00045">
    <property type="entry name" value="DAGKa"/>
    <property type="match status" value="1"/>
</dbReference>
<dbReference type="SMART" id="SM00046">
    <property type="entry name" value="DAGKc"/>
    <property type="match status" value="1"/>
</dbReference>
<dbReference type="SUPFAM" id="SSF48403">
    <property type="entry name" value="Ankyrin repeat"/>
    <property type="match status" value="1"/>
</dbReference>
<dbReference type="SUPFAM" id="SSF111331">
    <property type="entry name" value="NAD kinase/diacylglycerol kinase-like"/>
    <property type="match status" value="1"/>
</dbReference>
<dbReference type="PROSITE" id="PS50297">
    <property type="entry name" value="ANK_REP_REGION"/>
    <property type="match status" value="1"/>
</dbReference>
<dbReference type="PROSITE" id="PS50088">
    <property type="entry name" value="ANK_REPEAT"/>
    <property type="match status" value="2"/>
</dbReference>
<dbReference type="PROSITE" id="PS50146">
    <property type="entry name" value="DAGK"/>
    <property type="match status" value="1"/>
</dbReference>
<protein>
    <recommendedName>
        <fullName evidence="20">Diacylglycerol kinase zeta</fullName>
        <shortName>DAG kinase zeta</shortName>
        <ecNumber evidence="10 12 13 14 15 17 18">2.7.1.107</ecNumber>
        <ecNumber evidence="15">2.7.1.93</ecNumber>
    </recommendedName>
    <alternativeName>
        <fullName>Diglyceride kinase zeta</fullName>
        <shortName>DGK-zeta</shortName>
    </alternativeName>
</protein>
<gene>
    <name evidence="27" type="primary">DGKZ</name>
    <name type="synonym">DAGK6</name>
</gene>
<reference key="1">
    <citation type="journal article" date="1996" name="J. Biol. Chem.">
        <title>Molecular cloning and characterization of a novel human diacylglycerol kinase zeta.</title>
        <authorList>
            <person name="Bunting M."/>
            <person name="Tang W."/>
            <person name="Zimmerman G.A."/>
            <person name="McIntyre T.M."/>
            <person name="Prescott S.M."/>
        </authorList>
    </citation>
    <scope>NUCLEOTIDE SEQUENCE [MRNA] (ISOFORM 1)</scope>
    <scope>FUNCTION</scope>
    <scope>CATALYTIC ACTIVITY</scope>
    <scope>PATHWAY</scope>
    <scope>SUBSTRATE SPECIFICITY</scope>
    <scope>TISSUE SPECIFICITY</scope>
    <source>
        <tissue>Endothelial cell</tissue>
    </source>
</reference>
<reference key="2">
    <citation type="journal article" date="1997" name="Proc. Natl. Acad. Sci. U.S.A.">
        <title>Alternative splicing of the human diacylglycerol kinase zeta gene in muscle.</title>
        <authorList>
            <person name="Ding L."/>
            <person name="Bunting M."/>
            <person name="Topham M.K."/>
            <person name="McIntyre T.M."/>
            <person name="Zimmerman G.A."/>
            <person name="Prescott S.M."/>
        </authorList>
    </citation>
    <scope>NUCLEOTIDE SEQUENCE [MRNA] (ISOFORM 2)</scope>
    <scope>FUNCTION</scope>
    <scope>CATALYTIC ACTIVITY</scope>
    <scope>SUBCELLULAR LOCATION</scope>
    <scope>TISSUE SPECIFICITY (ISOFORM 2)</scope>
    <source>
        <tissue>Skeletal muscle</tissue>
    </source>
</reference>
<reference key="3">
    <citation type="journal article" date="2004" name="Nat. Genet.">
        <title>Complete sequencing and characterization of 21,243 full-length human cDNAs.</title>
        <authorList>
            <person name="Ota T."/>
            <person name="Suzuki Y."/>
            <person name="Nishikawa T."/>
            <person name="Otsuki T."/>
            <person name="Sugiyama T."/>
            <person name="Irie R."/>
            <person name="Wakamatsu A."/>
            <person name="Hayashi K."/>
            <person name="Sato H."/>
            <person name="Nagai K."/>
            <person name="Kimura K."/>
            <person name="Makita H."/>
            <person name="Sekine M."/>
            <person name="Obayashi M."/>
            <person name="Nishi T."/>
            <person name="Shibahara T."/>
            <person name="Tanaka T."/>
            <person name="Ishii S."/>
            <person name="Yamamoto J."/>
            <person name="Saito K."/>
            <person name="Kawai Y."/>
            <person name="Isono Y."/>
            <person name="Nakamura Y."/>
            <person name="Nagahari K."/>
            <person name="Murakami K."/>
            <person name="Yasuda T."/>
            <person name="Iwayanagi T."/>
            <person name="Wagatsuma M."/>
            <person name="Shiratori A."/>
            <person name="Sudo H."/>
            <person name="Hosoiri T."/>
            <person name="Kaku Y."/>
            <person name="Kodaira H."/>
            <person name="Kondo H."/>
            <person name="Sugawara M."/>
            <person name="Takahashi M."/>
            <person name="Kanda K."/>
            <person name="Yokoi T."/>
            <person name="Furuya T."/>
            <person name="Kikkawa E."/>
            <person name="Omura Y."/>
            <person name="Abe K."/>
            <person name="Kamihara K."/>
            <person name="Katsuta N."/>
            <person name="Sato K."/>
            <person name="Tanikawa M."/>
            <person name="Yamazaki M."/>
            <person name="Ninomiya K."/>
            <person name="Ishibashi T."/>
            <person name="Yamashita H."/>
            <person name="Murakawa K."/>
            <person name="Fujimori K."/>
            <person name="Tanai H."/>
            <person name="Kimata M."/>
            <person name="Watanabe M."/>
            <person name="Hiraoka S."/>
            <person name="Chiba Y."/>
            <person name="Ishida S."/>
            <person name="Ono Y."/>
            <person name="Takiguchi S."/>
            <person name="Watanabe S."/>
            <person name="Yosida M."/>
            <person name="Hotuta T."/>
            <person name="Kusano J."/>
            <person name="Kanehori K."/>
            <person name="Takahashi-Fujii A."/>
            <person name="Hara H."/>
            <person name="Tanase T.-O."/>
            <person name="Nomura Y."/>
            <person name="Togiya S."/>
            <person name="Komai F."/>
            <person name="Hara R."/>
            <person name="Takeuchi K."/>
            <person name="Arita M."/>
            <person name="Imose N."/>
            <person name="Musashino K."/>
            <person name="Yuuki H."/>
            <person name="Oshima A."/>
            <person name="Sasaki N."/>
            <person name="Aotsuka S."/>
            <person name="Yoshikawa Y."/>
            <person name="Matsunawa H."/>
            <person name="Ichihara T."/>
            <person name="Shiohata N."/>
            <person name="Sano S."/>
            <person name="Moriya S."/>
            <person name="Momiyama H."/>
            <person name="Satoh N."/>
            <person name="Takami S."/>
            <person name="Terashima Y."/>
            <person name="Suzuki O."/>
            <person name="Nakagawa S."/>
            <person name="Senoh A."/>
            <person name="Mizoguchi H."/>
            <person name="Goto Y."/>
            <person name="Shimizu F."/>
            <person name="Wakebe H."/>
            <person name="Hishigaki H."/>
            <person name="Watanabe T."/>
            <person name="Sugiyama A."/>
            <person name="Takemoto M."/>
            <person name="Kawakami B."/>
            <person name="Yamazaki M."/>
            <person name="Watanabe K."/>
            <person name="Kumagai A."/>
            <person name="Itakura S."/>
            <person name="Fukuzumi Y."/>
            <person name="Fujimori Y."/>
            <person name="Komiyama M."/>
            <person name="Tashiro H."/>
            <person name="Tanigami A."/>
            <person name="Fujiwara T."/>
            <person name="Ono T."/>
            <person name="Yamada K."/>
            <person name="Fujii Y."/>
            <person name="Ozaki K."/>
            <person name="Hirao M."/>
            <person name="Ohmori Y."/>
            <person name="Kawabata A."/>
            <person name="Hikiji T."/>
            <person name="Kobatake N."/>
            <person name="Inagaki H."/>
            <person name="Ikema Y."/>
            <person name="Okamoto S."/>
            <person name="Okitani R."/>
            <person name="Kawakami T."/>
            <person name="Noguchi S."/>
            <person name="Itoh T."/>
            <person name="Shigeta K."/>
            <person name="Senba T."/>
            <person name="Matsumura K."/>
            <person name="Nakajima Y."/>
            <person name="Mizuno T."/>
            <person name="Morinaga M."/>
            <person name="Sasaki M."/>
            <person name="Togashi T."/>
            <person name="Oyama M."/>
            <person name="Hata H."/>
            <person name="Watanabe M."/>
            <person name="Komatsu T."/>
            <person name="Mizushima-Sugano J."/>
            <person name="Satoh T."/>
            <person name="Shirai Y."/>
            <person name="Takahashi Y."/>
            <person name="Nakagawa K."/>
            <person name="Okumura K."/>
            <person name="Nagase T."/>
            <person name="Nomura N."/>
            <person name="Kikuchi H."/>
            <person name="Masuho Y."/>
            <person name="Yamashita R."/>
            <person name="Nakai K."/>
            <person name="Yada T."/>
            <person name="Nakamura Y."/>
            <person name="Ohara O."/>
            <person name="Isogai T."/>
            <person name="Sugano S."/>
        </authorList>
    </citation>
    <scope>NUCLEOTIDE SEQUENCE [LARGE SCALE MRNA] (ISOFORMS 3 AND 6)</scope>
    <scope>PARTIAL NUCLEOTIDE SEQUENCE [LARGE SCALE MRNA] (ISOFORM 7)</scope>
    <source>
        <tissue>Brain</tissue>
        <tissue>Cerebellum</tissue>
    </source>
</reference>
<reference key="4">
    <citation type="submission" date="2006-07" db="EMBL/GenBank/DDBJ databases">
        <authorList>
            <person name="Totoki Y."/>
            <person name="Toyoda A."/>
            <person name="Takeda T."/>
            <person name="Sakaki Y."/>
            <person name="Tanaka A."/>
            <person name="Yokoyama S."/>
        </authorList>
    </citation>
    <scope>NUCLEOTIDE SEQUENCE [LARGE SCALE MRNA] (ISOFORM 5)</scope>
    <source>
        <tissue>Brain</tissue>
    </source>
</reference>
<reference key="5">
    <citation type="journal article" date="2006" name="Nature">
        <title>Human chromosome 11 DNA sequence and analysis including novel gene identification.</title>
        <authorList>
            <person name="Taylor T.D."/>
            <person name="Noguchi H."/>
            <person name="Totoki Y."/>
            <person name="Toyoda A."/>
            <person name="Kuroki Y."/>
            <person name="Dewar K."/>
            <person name="Lloyd C."/>
            <person name="Itoh T."/>
            <person name="Takeda T."/>
            <person name="Kim D.-W."/>
            <person name="She X."/>
            <person name="Barlow K.F."/>
            <person name="Bloom T."/>
            <person name="Bruford E."/>
            <person name="Chang J.L."/>
            <person name="Cuomo C.A."/>
            <person name="Eichler E."/>
            <person name="FitzGerald M.G."/>
            <person name="Jaffe D.B."/>
            <person name="LaButti K."/>
            <person name="Nicol R."/>
            <person name="Park H.-S."/>
            <person name="Seaman C."/>
            <person name="Sougnez C."/>
            <person name="Yang X."/>
            <person name="Zimmer A.R."/>
            <person name="Zody M.C."/>
            <person name="Birren B.W."/>
            <person name="Nusbaum C."/>
            <person name="Fujiyama A."/>
            <person name="Hattori M."/>
            <person name="Rogers J."/>
            <person name="Lander E.S."/>
            <person name="Sakaki Y."/>
        </authorList>
    </citation>
    <scope>NUCLEOTIDE SEQUENCE [LARGE SCALE GENOMIC DNA]</scope>
</reference>
<reference key="6">
    <citation type="submission" date="2005-09" db="EMBL/GenBank/DDBJ databases">
        <authorList>
            <person name="Mural R.J."/>
            <person name="Istrail S."/>
            <person name="Sutton G."/>
            <person name="Florea L."/>
            <person name="Halpern A.L."/>
            <person name="Mobarry C.M."/>
            <person name="Lippert R."/>
            <person name="Walenz B."/>
            <person name="Shatkay H."/>
            <person name="Dew I."/>
            <person name="Miller J.R."/>
            <person name="Flanigan M.J."/>
            <person name="Edwards N.J."/>
            <person name="Bolanos R."/>
            <person name="Fasulo D."/>
            <person name="Halldorsson B.V."/>
            <person name="Hannenhalli S."/>
            <person name="Turner R."/>
            <person name="Yooseph S."/>
            <person name="Lu F."/>
            <person name="Nusskern D.R."/>
            <person name="Shue B.C."/>
            <person name="Zheng X.H."/>
            <person name="Zhong F."/>
            <person name="Delcher A.L."/>
            <person name="Huson D.H."/>
            <person name="Kravitz S.A."/>
            <person name="Mouchard L."/>
            <person name="Reinert K."/>
            <person name="Remington K.A."/>
            <person name="Clark A.G."/>
            <person name="Waterman M.S."/>
            <person name="Eichler E.E."/>
            <person name="Adams M.D."/>
            <person name="Hunkapiller M.W."/>
            <person name="Myers E.W."/>
            <person name="Venter J.C."/>
        </authorList>
    </citation>
    <scope>NUCLEOTIDE SEQUENCE [LARGE SCALE GENOMIC DNA]</scope>
</reference>
<reference key="7">
    <citation type="journal article" date="2004" name="Genome Res.">
        <title>The status, quality, and expansion of the NIH full-length cDNA project: the Mammalian Gene Collection (MGC).</title>
        <authorList>
            <consortium name="The MGC Project Team"/>
        </authorList>
    </citation>
    <scope>NUCLEOTIDE SEQUENCE [LARGE SCALE MRNA] (ISOFORM 4)</scope>
    <scope>VARIANT LYS-523</scope>
    <source>
        <tissue>Brain</tissue>
    </source>
</reference>
<reference key="8">
    <citation type="journal article" date="1998" name="Nature">
        <title>Protein kinase C regulates the nuclear localization of diacylglycerol kinase-zeta.</title>
        <authorList>
            <person name="Topham M.K."/>
            <person name="Bunting M."/>
            <person name="Zimmerman G.A."/>
            <person name="McIntyre T.M."/>
            <person name="Blackshear P.J."/>
            <person name="Prescott S.M."/>
        </authorList>
    </citation>
    <scope>PHOSPHORYLATION</scope>
    <scope>SUBCELLULAR LOCATION</scope>
</reference>
<reference key="9">
    <citation type="journal article" date="2001" name="J. Biol. Chem.">
        <title>Interaction of gamma 1-syntrophin with diacylglycerol kinase-zeta. Regulation of nuclear localization by PDZ interactions.</title>
        <authorList>
            <person name="Hogan A."/>
            <person name="Shepherd L."/>
            <person name="Chabot J."/>
            <person name="Quenneville S."/>
            <person name="Prescott S.M."/>
            <person name="Topham M.K."/>
            <person name="Gee S.H."/>
        </authorList>
    </citation>
    <scope>INTERACTION WITH SNTG1</scope>
    <scope>MUTAGENESIS OF 926-THR-ALA-927</scope>
    <scope>DOMAIN</scope>
    <scope>MOTIF</scope>
</reference>
<reference key="10">
    <citation type="journal article" date="2001" name="J. Cell Biol.">
        <title>Diacylglycerol kinase zeta regulates Ras activation by a novel mechanism.</title>
        <authorList>
            <person name="Topham M.K."/>
            <person name="Prescott S.M."/>
        </authorList>
    </citation>
    <scope>FUNCTION AS A RASGRP1 REGULATOR (ISOFORMS 1 AND 2)</scope>
    <scope>IDENTIFICATION IN A COMPLEX WITH RASGRP1 AND HRAS</scope>
    <scope>SUBCELLULAR LOCATION</scope>
    <scope>REGION</scope>
</reference>
<reference key="11">
    <citation type="journal article" date="2004" name="Biochemistry">
        <title>The alpha isoform of diacylglycerol kinase exhibits arachidonoyl specificity with alkylacylglycerol.</title>
        <authorList>
            <person name="Epand R.M."/>
            <person name="Kam A."/>
            <person name="Bridgelal N."/>
            <person name="Saiga A."/>
            <person name="Topham M.K."/>
        </authorList>
    </citation>
    <scope>FUNCTION</scope>
    <scope>CATALYTIC ACTIVITY</scope>
    <scope>SUBSTRATE SPECIFICITY</scope>
</reference>
<reference key="12">
    <citation type="journal article" date="2004" name="Cell. Signal.">
        <title>Diacylglycerol kinase zeta regulates phosphatidylinositol 4-phosphate 5-kinase Ialpha by a novel mechanism.</title>
        <authorList>
            <person name="Luo B."/>
            <person name="Prescott S.M."/>
            <person name="Topham M.K."/>
        </authorList>
    </citation>
    <scope>FUNCTION</scope>
    <scope>INTERACTION WITH PIP5K1A</scope>
    <scope>SUBCELLULAR LOCATION</scope>
</reference>
<reference key="13">
    <citation type="journal article" date="2007" name="Biochemistry">
        <title>Substrate chirality and specificity of diacylglycerol kinases and the multisubstrate lipid kinase.</title>
        <authorList>
            <person name="Epand R.M."/>
            <person name="Shulga Y.V."/>
            <person name="Timmons H.C."/>
            <person name="Perri A.L."/>
            <person name="Belani J.D."/>
            <person name="Perinpanathan K."/>
            <person name="Johnson-McIntire L.B."/>
            <person name="Bajjalieh S."/>
            <person name="Dicu A.O."/>
            <person name="Elias C."/>
            <person name="Rychnovsky S.D."/>
            <person name="Topham M.K."/>
        </authorList>
    </citation>
    <scope>FUNCTION</scope>
    <scope>CATALYTIC ACTIVITY</scope>
</reference>
<reference key="14">
    <citation type="journal article" date="2007" name="Mol. Cell. Proteomics">
        <title>Proteomics identification of sorting nexin 27 as a diacylglycerol kinase zeta-associated protein: new diacylglycerol kinase roles in endocytic recycling.</title>
        <authorList>
            <person name="Rincon E."/>
            <person name="Santos T."/>
            <person name="Avila-Flores A."/>
            <person name="Albar J.P."/>
            <person name="Lalioti V."/>
            <person name="Lei C."/>
            <person name="Hong W."/>
            <person name="Merida I."/>
        </authorList>
    </citation>
    <scope>INTERACTION WITH SNX27</scope>
    <scope>DOMAIN</scope>
    <scope>MOTIF</scope>
</reference>
<reference key="15">
    <citation type="journal article" date="2009" name="J. Biol. Chem.">
        <title>Diacylglycerol kinase epsilon is selective for both acyl chains of phosphatidic acid or diacylglycerol.</title>
        <authorList>
            <person name="Lung M."/>
            <person name="Shulga Y.V."/>
            <person name="Ivanova P.T."/>
            <person name="Myers D.S."/>
            <person name="Milne S.B."/>
            <person name="Brown H.A."/>
            <person name="Topham M.K."/>
            <person name="Epand R.M."/>
        </authorList>
    </citation>
    <scope>FUNCTION</scope>
    <scope>CATALYTIC ACTIVITY</scope>
    <scope>SUBSTRATE SPECIFICITY</scope>
    <scope>ACTIVITY REGULATION</scope>
</reference>
<reference key="16">
    <citation type="journal article" date="2011" name="FEBS Lett.">
        <title>Substrate specificity of diacylglycerol kinase-epsilon and the phosphatidylinositol cycle.</title>
        <authorList>
            <person name="Shulga Y.V."/>
            <person name="Topham M.K."/>
            <person name="Epand R.M."/>
        </authorList>
    </citation>
    <scope>FUNCTION</scope>
    <scope>CATALYTIC ACTIVITY</scope>
    <scope>SUBSTRATE SPECIFICITY</scope>
</reference>
<reference key="17">
    <citation type="journal article" date="2012" name="Biochem. Biophys. Res. Commun.">
        <title>Biosynthesis of alkyl lysophosphatidic acid by diacylglycerol kinases.</title>
        <authorList>
            <person name="Gellett A.M."/>
            <person name="Kharel Y."/>
            <person name="Sunkara M."/>
            <person name="Morris A.J."/>
            <person name="Lynch K.R."/>
        </authorList>
    </citation>
    <scope>FUNCTION</scope>
    <scope>CATALYTIC ACTIVITY</scope>
    <scope>SUBCELLULAR LOCATION</scope>
</reference>
<reference key="18">
    <citation type="journal article" date="2013" name="Pharmacology">
        <title>Evaluations of the selectivities of the diacylglycerol kinase inhibitors R59022 and R59949 among diacylglycerol kinase isozymes using a new non-radioactive assay method.</title>
        <authorList>
            <person name="Sato M."/>
            <person name="Liu K."/>
            <person name="Sasaki S."/>
            <person name="Kunii N."/>
            <person name="Sakai H."/>
            <person name="Mizuno H."/>
            <person name="Saga H."/>
            <person name="Sakane F."/>
        </authorList>
    </citation>
    <scope>FUNCTION</scope>
    <scope>CATALYTIC ACTIVITY</scope>
</reference>
<reference key="19">
    <citation type="journal article" date="2013" name="J. Proteome Res.">
        <title>Toward a comprehensive characterization of a human cancer cell phosphoproteome.</title>
        <authorList>
            <person name="Zhou H."/>
            <person name="Di Palma S."/>
            <person name="Preisinger C."/>
            <person name="Peng M."/>
            <person name="Polat A.N."/>
            <person name="Heck A.J."/>
            <person name="Mohammed S."/>
        </authorList>
    </citation>
    <scope>PHOSPHORYLATION [LARGE SCALE ANALYSIS] AT SER-705 AND SER-781</scope>
    <scope>IDENTIFICATION BY MASS SPECTROMETRY [LARGE SCALE ANALYSIS]</scope>
    <source>
        <tissue>Erythroleukemia</tissue>
    </source>
</reference>
<reference key="20">
    <citation type="journal article" date="2014" name="J. Proteomics">
        <title>An enzyme assisted RP-RPLC approach for in-depth analysis of human liver phosphoproteome.</title>
        <authorList>
            <person name="Bian Y."/>
            <person name="Song C."/>
            <person name="Cheng K."/>
            <person name="Dong M."/>
            <person name="Wang F."/>
            <person name="Huang J."/>
            <person name="Sun D."/>
            <person name="Wang L."/>
            <person name="Ye M."/>
            <person name="Zou H."/>
        </authorList>
    </citation>
    <scope>IDENTIFICATION BY MASS SPECTROMETRY [LARGE SCALE ANALYSIS]</scope>
    <source>
        <tissue>Liver</tissue>
    </source>
</reference>
<proteinExistence type="evidence at protein level"/>